<comment type="function">
    <text evidence="2">Component of the GPI transamidase complex. Involved in transfer of GPI to proteins.</text>
</comment>
<comment type="pathway">
    <text>Glycolipid biosynthesis; glycosylphosphatidylinositol-anchor biosynthesis.</text>
</comment>
<comment type="subunit">
    <text>Forms a complex with CDC91, GPI16, GPI8 and GAA1.</text>
</comment>
<comment type="interaction">
    <interactant intactId="EBI-7777">
        <id>Q04080</id>
    </interactant>
    <interactant intactId="EBI-7252">
        <id>P39012</id>
        <label>GAA1</label>
    </interactant>
    <organismsDiffer>false</organismsDiffer>
    <experiments>3</experiments>
</comment>
<comment type="interaction">
    <interactant intactId="EBI-7777">
        <id>Q04080</id>
    </interactant>
    <interactant intactId="EBI-24869">
        <id>P38875</id>
        <label>GPI16</label>
    </interactant>
    <organismsDiffer>false</organismsDiffer>
    <experiments>3</experiments>
</comment>
<comment type="interaction">
    <interactant intactId="EBI-7777">
        <id>Q04080</id>
    </interactant>
    <interactant intactId="EBI-7822">
        <id>P49018</id>
        <label>GPI8</label>
    </interactant>
    <organismsDiffer>false</organismsDiffer>
    <experiments>5</experiments>
</comment>
<comment type="subcellular location">
    <subcellularLocation>
        <location evidence="5">Endoplasmic reticulum membrane</location>
        <topology evidence="5">Multi-pass membrane protein</topology>
    </subcellularLocation>
</comment>
<comment type="PTM">
    <text evidence="4">N-glycosylated.</text>
</comment>
<comment type="miscellaneous">
    <text evidence="3">Present with 7520 molecules/cell in log phase SD medium.</text>
</comment>
<comment type="similarity">
    <text evidence="5">Belongs to the PIGS family.</text>
</comment>
<protein>
    <recommendedName>
        <fullName>GPI transamidase component GPI17</fullName>
    </recommendedName>
</protein>
<reference key="1">
    <citation type="journal article" date="1997" name="Nature">
        <title>The nucleotide sequence of Saccharomyces cerevisiae chromosome IV.</title>
        <authorList>
            <person name="Jacq C."/>
            <person name="Alt-Moerbe J."/>
            <person name="Andre B."/>
            <person name="Arnold W."/>
            <person name="Bahr A."/>
            <person name="Ballesta J.P.G."/>
            <person name="Bargues M."/>
            <person name="Baron L."/>
            <person name="Becker A."/>
            <person name="Biteau N."/>
            <person name="Bloecker H."/>
            <person name="Blugeon C."/>
            <person name="Boskovic J."/>
            <person name="Brandt P."/>
            <person name="Brueckner M."/>
            <person name="Buitrago M.J."/>
            <person name="Coster F."/>
            <person name="Delaveau T."/>
            <person name="del Rey F."/>
            <person name="Dujon B."/>
            <person name="Eide L.G."/>
            <person name="Garcia-Cantalejo J.M."/>
            <person name="Goffeau A."/>
            <person name="Gomez-Peris A."/>
            <person name="Granotier C."/>
            <person name="Hanemann V."/>
            <person name="Hankeln T."/>
            <person name="Hoheisel J.D."/>
            <person name="Jaeger W."/>
            <person name="Jimenez A."/>
            <person name="Jonniaux J.-L."/>
            <person name="Kraemer C."/>
            <person name="Kuester H."/>
            <person name="Laamanen P."/>
            <person name="Legros Y."/>
            <person name="Louis E.J."/>
            <person name="Moeller-Rieker S."/>
            <person name="Monnet A."/>
            <person name="Moro M."/>
            <person name="Mueller-Auer S."/>
            <person name="Nussbaumer B."/>
            <person name="Paricio N."/>
            <person name="Paulin L."/>
            <person name="Perea J."/>
            <person name="Perez-Alonso M."/>
            <person name="Perez-Ortin J.E."/>
            <person name="Pohl T.M."/>
            <person name="Prydz H."/>
            <person name="Purnelle B."/>
            <person name="Rasmussen S.W."/>
            <person name="Remacha M.A."/>
            <person name="Revuelta J.L."/>
            <person name="Rieger M."/>
            <person name="Salom D."/>
            <person name="Saluz H.P."/>
            <person name="Saiz J.E."/>
            <person name="Saren A.-M."/>
            <person name="Schaefer M."/>
            <person name="Scharfe M."/>
            <person name="Schmidt E.R."/>
            <person name="Schneider C."/>
            <person name="Scholler P."/>
            <person name="Schwarz S."/>
            <person name="Soler-Mira A."/>
            <person name="Urrestarazu L.A."/>
            <person name="Verhasselt P."/>
            <person name="Vissers S."/>
            <person name="Voet M."/>
            <person name="Volckaert G."/>
            <person name="Wagner G."/>
            <person name="Wambutt R."/>
            <person name="Wedler E."/>
            <person name="Wedler H."/>
            <person name="Woelfl S."/>
            <person name="Harris D.E."/>
            <person name="Bowman S."/>
            <person name="Brown D."/>
            <person name="Churcher C.M."/>
            <person name="Connor R."/>
            <person name="Dedman K."/>
            <person name="Gentles S."/>
            <person name="Hamlin N."/>
            <person name="Hunt S."/>
            <person name="Jones L."/>
            <person name="McDonald S."/>
            <person name="Murphy L.D."/>
            <person name="Niblett D."/>
            <person name="Odell C."/>
            <person name="Oliver K."/>
            <person name="Rajandream M.A."/>
            <person name="Richards C."/>
            <person name="Shore L."/>
            <person name="Walsh S.V."/>
            <person name="Barrell B.G."/>
            <person name="Dietrich F.S."/>
            <person name="Mulligan J.T."/>
            <person name="Allen E."/>
            <person name="Araujo R."/>
            <person name="Aviles E."/>
            <person name="Berno A."/>
            <person name="Carpenter J."/>
            <person name="Chen E."/>
            <person name="Cherry J.M."/>
            <person name="Chung E."/>
            <person name="Duncan M."/>
            <person name="Hunicke-Smith S."/>
            <person name="Hyman R.W."/>
            <person name="Komp C."/>
            <person name="Lashkari D."/>
            <person name="Lew H."/>
            <person name="Lin D."/>
            <person name="Mosedale D."/>
            <person name="Nakahara K."/>
            <person name="Namath A."/>
            <person name="Oefner P."/>
            <person name="Oh C."/>
            <person name="Petel F.X."/>
            <person name="Roberts D."/>
            <person name="Schramm S."/>
            <person name="Schroeder M."/>
            <person name="Shogren T."/>
            <person name="Shroff N."/>
            <person name="Winant A."/>
            <person name="Yelton M.A."/>
            <person name="Botstein D."/>
            <person name="Davis R.W."/>
            <person name="Johnston M."/>
            <person name="Andrews S."/>
            <person name="Brinkman R."/>
            <person name="Cooper J."/>
            <person name="Ding H."/>
            <person name="Du Z."/>
            <person name="Favello A."/>
            <person name="Fulton L."/>
            <person name="Gattung S."/>
            <person name="Greco T."/>
            <person name="Hallsworth K."/>
            <person name="Hawkins J."/>
            <person name="Hillier L.W."/>
            <person name="Jier M."/>
            <person name="Johnson D."/>
            <person name="Johnston L."/>
            <person name="Kirsten J."/>
            <person name="Kucaba T."/>
            <person name="Langston Y."/>
            <person name="Latreille P."/>
            <person name="Le T."/>
            <person name="Mardis E."/>
            <person name="Menezes S."/>
            <person name="Miller N."/>
            <person name="Nhan M."/>
            <person name="Pauley A."/>
            <person name="Peluso D."/>
            <person name="Rifkin L."/>
            <person name="Riles L."/>
            <person name="Taich A."/>
            <person name="Trevaskis E."/>
            <person name="Vignati D."/>
            <person name="Wilcox L."/>
            <person name="Wohldman P."/>
            <person name="Vaudin M."/>
            <person name="Wilson R."/>
            <person name="Waterston R."/>
            <person name="Albermann K."/>
            <person name="Hani J."/>
            <person name="Heumann K."/>
            <person name="Kleine K."/>
            <person name="Mewes H.-W."/>
            <person name="Zollner A."/>
            <person name="Zaccaria P."/>
        </authorList>
    </citation>
    <scope>NUCLEOTIDE SEQUENCE [LARGE SCALE GENOMIC DNA]</scope>
    <source>
        <strain>ATCC 204508 / S288c</strain>
    </source>
</reference>
<reference key="2">
    <citation type="journal article" date="2014" name="G3 (Bethesda)">
        <title>The reference genome sequence of Saccharomyces cerevisiae: Then and now.</title>
        <authorList>
            <person name="Engel S.R."/>
            <person name="Dietrich F.S."/>
            <person name="Fisk D.G."/>
            <person name="Binkley G."/>
            <person name="Balakrishnan R."/>
            <person name="Costanzo M.C."/>
            <person name="Dwight S.S."/>
            <person name="Hitz B.C."/>
            <person name="Karra K."/>
            <person name="Nash R.S."/>
            <person name="Weng S."/>
            <person name="Wong E.D."/>
            <person name="Lloyd P."/>
            <person name="Skrzypek M.S."/>
            <person name="Miyasato S.R."/>
            <person name="Simison M."/>
            <person name="Cherry J.M."/>
        </authorList>
    </citation>
    <scope>GENOME REANNOTATION</scope>
    <source>
        <strain>ATCC 204508 / S288c</strain>
    </source>
</reference>
<reference key="3">
    <citation type="journal article" date="2001" name="EMBO J.">
        <title>PIG-S and PIG-T, essential for GPI anchor attachment to proteins, form a complex with GAA1 and GPI8.</title>
        <authorList>
            <person name="Ohishi K."/>
            <person name="Inoue N."/>
            <person name="Kinoshita T."/>
        </authorList>
    </citation>
    <scope>FUNCTION</scope>
</reference>
<reference key="4">
    <citation type="journal article" date="2003" name="Nature">
        <title>Global analysis of protein localization in budding yeast.</title>
        <authorList>
            <person name="Huh W.-K."/>
            <person name="Falvo J.V."/>
            <person name="Gerke L.C."/>
            <person name="Carroll A.S."/>
            <person name="Howson R.W."/>
            <person name="Weissman J.S."/>
            <person name="O'Shea E.K."/>
        </authorList>
    </citation>
    <scope>SUBCELLULAR LOCATION [LARGE SCALE ANALYSIS]</scope>
</reference>
<reference key="5">
    <citation type="journal article" date="2003" name="Nature">
        <title>Global analysis of protein expression in yeast.</title>
        <authorList>
            <person name="Ghaemmaghami S."/>
            <person name="Huh W.-K."/>
            <person name="Bower K."/>
            <person name="Howson R.W."/>
            <person name="Belle A."/>
            <person name="Dephoure N."/>
            <person name="O'Shea E.K."/>
            <person name="Weissman J.S."/>
        </authorList>
    </citation>
    <scope>LEVEL OF PROTEIN EXPRESSION [LARGE SCALE ANALYSIS]</scope>
</reference>
<reference key="6">
    <citation type="journal article" date="2006" name="Proc. Natl. Acad. Sci. U.S.A.">
        <title>A global topology map of the Saccharomyces cerevisiae membrane proteome.</title>
        <authorList>
            <person name="Kim H."/>
            <person name="Melen K."/>
            <person name="Oesterberg M."/>
            <person name="von Heijne G."/>
        </authorList>
    </citation>
    <scope>TOPOLOGY [LARGE SCALE ANALYSIS]</scope>
    <source>
        <strain>ATCC 208353 / W303-1A</strain>
    </source>
</reference>
<reference key="7">
    <citation type="journal article" date="2009" name="Mol. Syst. Biol.">
        <title>Global analysis of the glycoproteome in Saccharomyces cerevisiae reveals new roles for protein glycosylation in eukaryotes.</title>
        <authorList>
            <person name="Kung L.A."/>
            <person name="Tao S.-C."/>
            <person name="Qian J."/>
            <person name="Smith M.G."/>
            <person name="Snyder M."/>
            <person name="Zhu H."/>
        </authorList>
    </citation>
    <scope>GLYCOSYLATION [LARGE SCALE ANALYSIS]</scope>
</reference>
<keyword id="KW-0256">Endoplasmic reticulum</keyword>
<keyword id="KW-0325">Glycoprotein</keyword>
<keyword id="KW-0337">GPI-anchor biosynthesis</keyword>
<keyword id="KW-0472">Membrane</keyword>
<keyword id="KW-1185">Reference proteome</keyword>
<keyword id="KW-0812">Transmembrane</keyword>
<keyword id="KW-1133">Transmembrane helix</keyword>
<accession>Q04080</accession>
<accession>D6VT61</accession>
<name>GPI17_YEAST</name>
<dbReference type="EMBL" id="U33007">
    <property type="protein sequence ID" value="AAB64866.1"/>
    <property type="molecule type" value="Genomic_DNA"/>
</dbReference>
<dbReference type="EMBL" id="BK006938">
    <property type="protein sequence ID" value="DAA12271.1"/>
    <property type="molecule type" value="Genomic_DNA"/>
</dbReference>
<dbReference type="PIR" id="S69714">
    <property type="entry name" value="S69714"/>
</dbReference>
<dbReference type="RefSeq" id="NP_010722.3">
    <property type="nucleotide sequence ID" value="NM_001180742.3"/>
</dbReference>
<dbReference type="SMR" id="Q04080"/>
<dbReference type="BioGRID" id="32490">
    <property type="interactions" value="391"/>
</dbReference>
<dbReference type="ComplexPortal" id="CPX-1275">
    <property type="entry name" value="GPI-anchor transamidase complex"/>
</dbReference>
<dbReference type="FunCoup" id="Q04080">
    <property type="interactions" value="870"/>
</dbReference>
<dbReference type="IntAct" id="Q04080">
    <property type="interactions" value="22"/>
</dbReference>
<dbReference type="MINT" id="Q04080"/>
<dbReference type="STRING" id="4932.YDR434W"/>
<dbReference type="GlyCosmos" id="Q04080">
    <property type="glycosylation" value="5 sites, No reported glycans"/>
</dbReference>
<dbReference type="GlyGen" id="Q04080">
    <property type="glycosylation" value="5 sites"/>
</dbReference>
<dbReference type="PaxDb" id="4932-YDR434W"/>
<dbReference type="PeptideAtlas" id="Q04080"/>
<dbReference type="EnsemblFungi" id="YDR434W_mRNA">
    <property type="protein sequence ID" value="YDR434W"/>
    <property type="gene ID" value="YDR434W"/>
</dbReference>
<dbReference type="GeneID" id="852044"/>
<dbReference type="KEGG" id="sce:YDR434W"/>
<dbReference type="AGR" id="SGD:S000002842"/>
<dbReference type="SGD" id="S000002842">
    <property type="gene designation" value="GPI17"/>
</dbReference>
<dbReference type="VEuPathDB" id="FungiDB:YDR434W"/>
<dbReference type="eggNOG" id="KOG2459">
    <property type="taxonomic scope" value="Eukaryota"/>
</dbReference>
<dbReference type="GeneTree" id="ENSGT00390000017203"/>
<dbReference type="HOGENOM" id="CLU_010026_1_0_1"/>
<dbReference type="InParanoid" id="Q04080"/>
<dbReference type="OMA" id="AEHKYAV"/>
<dbReference type="OrthoDB" id="28748at2759"/>
<dbReference type="BioCyc" id="YEAST:YDR434W-MONOMER"/>
<dbReference type="UniPathway" id="UPA00196"/>
<dbReference type="BioGRID-ORCS" id="852044">
    <property type="hits" value="4 hits in 10 CRISPR screens"/>
</dbReference>
<dbReference type="PRO" id="PR:Q04080"/>
<dbReference type="Proteomes" id="UP000002311">
    <property type="component" value="Chromosome IV"/>
</dbReference>
<dbReference type="RNAct" id="Q04080">
    <property type="molecule type" value="protein"/>
</dbReference>
<dbReference type="GO" id="GO:0005783">
    <property type="term" value="C:endoplasmic reticulum"/>
    <property type="evidence" value="ECO:0000314"/>
    <property type="project" value="SGD"/>
</dbReference>
<dbReference type="GO" id="GO:0005789">
    <property type="term" value="C:endoplasmic reticulum membrane"/>
    <property type="evidence" value="ECO:0000303"/>
    <property type="project" value="ComplexPortal"/>
</dbReference>
<dbReference type="GO" id="GO:0042765">
    <property type="term" value="C:GPI-anchor transamidase complex"/>
    <property type="evidence" value="ECO:0000314"/>
    <property type="project" value="SGD"/>
</dbReference>
<dbReference type="GO" id="GO:0016020">
    <property type="term" value="C:membrane"/>
    <property type="evidence" value="ECO:0000314"/>
    <property type="project" value="SGD"/>
</dbReference>
<dbReference type="GO" id="GO:0005637">
    <property type="term" value="C:nuclear inner membrane"/>
    <property type="evidence" value="ECO:0000314"/>
    <property type="project" value="SGD"/>
</dbReference>
<dbReference type="GO" id="GO:0016255">
    <property type="term" value="P:attachment of GPI anchor to protein"/>
    <property type="evidence" value="ECO:0000315"/>
    <property type="project" value="SGD"/>
</dbReference>
<dbReference type="GO" id="GO:0031505">
    <property type="term" value="P:fungal-type cell wall organization"/>
    <property type="evidence" value="ECO:0000303"/>
    <property type="project" value="ComplexPortal"/>
</dbReference>
<dbReference type="GO" id="GO:0006506">
    <property type="term" value="P:GPI anchor biosynthetic process"/>
    <property type="evidence" value="ECO:0007669"/>
    <property type="project" value="UniProtKB-UniPathway"/>
</dbReference>
<dbReference type="InterPro" id="IPR019540">
    <property type="entry name" value="PtdIno-glycan_biosynth_class_S"/>
</dbReference>
<dbReference type="PANTHER" id="PTHR21072">
    <property type="entry name" value="GPI TRANSAMIDASE COMPONENT PIG-S"/>
    <property type="match status" value="1"/>
</dbReference>
<dbReference type="PANTHER" id="PTHR21072:SF13">
    <property type="entry name" value="GPI TRANSAMIDASE COMPONENT PIG-S"/>
    <property type="match status" value="1"/>
</dbReference>
<dbReference type="Pfam" id="PF10510">
    <property type="entry name" value="PIG-S"/>
    <property type="match status" value="1"/>
</dbReference>
<feature type="chain" id="PRO_0000218608" description="GPI transamidase component GPI17">
    <location>
        <begin position="1"/>
        <end position="534"/>
    </location>
</feature>
<feature type="topological domain" description="Cytoplasmic" evidence="1">
    <location>
        <begin position="1"/>
        <end position="8"/>
    </location>
</feature>
<feature type="transmembrane region" description="Helical" evidence="1">
    <location>
        <begin position="9"/>
        <end position="29"/>
    </location>
</feature>
<feature type="topological domain" description="Lumenal" evidence="1">
    <location>
        <begin position="30"/>
        <end position="472"/>
    </location>
</feature>
<feature type="transmembrane region" description="Helical" evidence="1">
    <location>
        <begin position="473"/>
        <end position="493"/>
    </location>
</feature>
<feature type="topological domain" description="Cytoplasmic" evidence="1">
    <location>
        <begin position="494"/>
        <end position="534"/>
    </location>
</feature>
<feature type="glycosylation site" description="N-linked (GlcNAc...) asparagine" evidence="1">
    <location>
        <position position="100"/>
    </location>
</feature>
<feature type="glycosylation site" description="N-linked (GlcNAc...) asparagine" evidence="1">
    <location>
        <position position="170"/>
    </location>
</feature>
<feature type="glycosylation site" description="N-linked (GlcNAc...) asparagine" evidence="1">
    <location>
        <position position="228"/>
    </location>
</feature>
<feature type="glycosylation site" description="N-linked (GlcNAc...) asparagine" evidence="1">
    <location>
        <position position="247"/>
    </location>
</feature>
<feature type="glycosylation site" description="N-linked (GlcNAc...) asparagine" evidence="1">
    <location>
        <position position="299"/>
    </location>
</feature>
<evidence type="ECO:0000255" key="1"/>
<evidence type="ECO:0000269" key="2">
    <source>
    </source>
</evidence>
<evidence type="ECO:0000269" key="3">
    <source>
    </source>
</evidence>
<evidence type="ECO:0000269" key="4">
    <source>
    </source>
</evidence>
<evidence type="ECO:0000305" key="5"/>
<gene>
    <name type="primary">GPI17</name>
    <name type="ordered locus">YDR434W</name>
    <name type="ORF">D9461.20</name>
</gene>
<proteinExistence type="evidence at protein level"/>
<organism>
    <name type="scientific">Saccharomyces cerevisiae (strain ATCC 204508 / S288c)</name>
    <name type="common">Baker's yeast</name>
    <dbReference type="NCBI Taxonomy" id="559292"/>
    <lineage>
        <taxon>Eukaryota</taxon>
        <taxon>Fungi</taxon>
        <taxon>Dikarya</taxon>
        <taxon>Ascomycota</taxon>
        <taxon>Saccharomycotina</taxon>
        <taxon>Saccharomycetes</taxon>
        <taxon>Saccharomycetales</taxon>
        <taxon>Saccharomycetaceae</taxon>
        <taxon>Saccharomyces</taxon>
    </lineage>
</organism>
<sequence>MSNANLRKWVGFCFVAIYLFLGVPLWYKLTTVYRASLPINYIESLQNNKFQDIHLVIPVYVKSDTYRFPDVHDAIQVQVNHLLNSQEQRVPWSLQVLPYNETIEQMESEGNQFHVVTLKLDEFIGYSSAYDTKETLVYYDDAAVLSNDLPFFVAQTLVEHTFQLEWTHLNKTCEGVSTNNDVAISYDPNIHLSVTLLSGDGNPVAWEIEPTLTDYFSPFRKFLSPLVNFTVDSSIVYHNDLNLHSLNGSCTSVTWFDLSHTIDLSELSSMAYYPEDSALNLAIVFPSASSSPDGLAFINGTRISDEITTLDWNSYLVPQWGVIIINKMPLKPNSVISEDYLEPMMYRFATDIFQLLGLTEGSQDLLSPYITIDSFKRLTILQNLDKATETLWSLVKLTQQFQGMSIPREVSDNVIEALDLRLQIIDLLNDPGKGGDIVWNNALHLSNELVKLCEKAFFNGEMVQQNFFPQEHMIAVYLPLLGPISAVMFFGFYNVMKEKNQKSKKNGTEREVAKEKLELKEAQKLHAIDGEDEL</sequence>